<sequence length="258" mass="30049">MQKIFRPFQLTRGFTSSVKNFRQWRLIETRKIAKQPNYQVGDAKPLHMPKERKKFPDYKYGESNIFKQSNKGLYGGSFVQFGNNISESKAKTRKKWLPNVVKKGLWSETLNRKISIKMTAKVLKTISKEGGIDNYLTKEKSARIKELGPTGWKLRYRVLKRKDEIENPPHKDAPIIEMAGGKKAKIYYDEIVNGSPRKISVGRRRLMSFLYPLEKLEYRSVGKDLNYKKFVELFADVPVKDILARLEDHKFDLSTITV</sequence>
<accession>P36525</accession>
<accession>D6W017</accession>
<feature type="transit peptide" description="Mitochondrion" evidence="3">
    <location>
        <begin position="1"/>
        <end position="21"/>
    </location>
</feature>
<feature type="chain" id="PRO_0000030509" description="Large ribosomal subunit protein bL28m">
    <location>
        <begin position="22"/>
        <end position="258"/>
    </location>
</feature>
<feature type="sequence conflict" description="In Ref. 5; AA sequence." evidence="8" ref="5">
    <original>G</original>
    <variation>K</variation>
    <location>
        <position position="72"/>
    </location>
</feature>
<feature type="sequence conflict" description="In Ref. 5; AA sequence." evidence="8" ref="5">
    <original>G</original>
    <variation>D</variation>
    <location>
        <position position="76"/>
    </location>
</feature>
<feature type="sequence conflict" description="In Ref. 5; AA sequence." evidence="8" ref="5">
    <original>G</original>
    <variation>Q</variation>
    <location>
        <position position="130"/>
    </location>
</feature>
<name>RM24_YEAST</name>
<comment type="function">
    <text evidence="9 10">Component of the mitochondrial ribosome (mitoribosome), a dedicated translation machinery responsible for the synthesis of mitochondrial genome-encoded proteins, including at least some of the essential transmembrane subunits of the mitochondrial respiratory chain. The mitoribosomes are attached to the mitochondrial inner membrane and translation products are cotranslationally integrated into the membrane.</text>
</comment>
<comment type="subunit">
    <text evidence="3 4 6">Component of the mitochondrial large ribosomal subunit (mt-LSU). Mature yeast 74S mitochondrial ribosomes consist of a small (37S) and a large (54S) subunit. The 37S small subunit contains a 15S ribosomal RNA (15S mt-rRNA) and 34 different proteins. The 54S large subunit contains a 21S rRNA (21S mt-rRNA) and 46 different proteins.</text>
</comment>
<comment type="subcellular location">
    <subcellularLocation>
        <location evidence="2">Mitochondrion</location>
    </subcellularLocation>
    <text evidence="5">Mitoribosomes are tethered to the mitochondrial inner membrane and spatially aligned with the membrane insertion machinery through two distinct membrane contact sites, formed by the 21S rRNA expansion segment 96-ES1 and the inner membrane protein MBA1.</text>
</comment>
<comment type="miscellaneous">
    <text evidence="1">Present with 4000 molecules/cell in log phase SD medium.</text>
</comment>
<comment type="similarity">
    <text evidence="8">Belongs to the bacterial ribosomal protein bL28 family.</text>
</comment>
<evidence type="ECO:0000269" key="1">
    <source>
    </source>
</evidence>
<evidence type="ECO:0000269" key="2">
    <source>
    </source>
</evidence>
<evidence type="ECO:0000269" key="3">
    <source>
    </source>
</evidence>
<evidence type="ECO:0000269" key="4">
    <source>
    </source>
</evidence>
<evidence type="ECO:0000269" key="5">
    <source>
    </source>
</evidence>
<evidence type="ECO:0000269" key="6">
    <source>
    </source>
</evidence>
<evidence type="ECO:0000303" key="7">
    <source>
    </source>
</evidence>
<evidence type="ECO:0000305" key="8"/>
<evidence type="ECO:0000305" key="9">
    <source>
    </source>
</evidence>
<evidence type="ECO:0000305" key="10">
    <source>
    </source>
</evidence>
<dbReference type="EMBL" id="Z47815">
    <property type="protein sequence ID" value="CAA87814.1"/>
    <property type="molecule type" value="Genomic_DNA"/>
</dbReference>
<dbReference type="EMBL" id="AY557982">
    <property type="protein sequence ID" value="AAS56308.1"/>
    <property type="molecule type" value="Genomic_DNA"/>
</dbReference>
<dbReference type="EMBL" id="BK006946">
    <property type="protein sequence ID" value="DAA10091.1"/>
    <property type="molecule type" value="Genomic_DNA"/>
</dbReference>
<dbReference type="PIR" id="S50921">
    <property type="entry name" value="S50921"/>
</dbReference>
<dbReference type="RefSeq" id="NP_013918.1">
    <property type="nucleotide sequence ID" value="NM_001182700.1"/>
</dbReference>
<dbReference type="PDB" id="3J6B">
    <property type="method" value="EM"/>
    <property type="resolution" value="3.20 A"/>
    <property type="chains" value="S=1-258"/>
</dbReference>
<dbReference type="PDB" id="5MRC">
    <property type="method" value="EM"/>
    <property type="resolution" value="3.25 A"/>
    <property type="chains" value="S=22-237"/>
</dbReference>
<dbReference type="PDB" id="5MRE">
    <property type="method" value="EM"/>
    <property type="resolution" value="3.75 A"/>
    <property type="chains" value="S=22-237"/>
</dbReference>
<dbReference type="PDB" id="5MRF">
    <property type="method" value="EM"/>
    <property type="resolution" value="4.97 A"/>
    <property type="chains" value="S=22-237"/>
</dbReference>
<dbReference type="PDBsum" id="3J6B"/>
<dbReference type="PDBsum" id="5MRC"/>
<dbReference type="PDBsum" id="5MRE"/>
<dbReference type="PDBsum" id="5MRF"/>
<dbReference type="EMDB" id="EMD-3551"/>
<dbReference type="EMDB" id="EMD-3552"/>
<dbReference type="EMDB" id="EMD-3553"/>
<dbReference type="SMR" id="P36525"/>
<dbReference type="BioGRID" id="35371">
    <property type="interactions" value="275"/>
</dbReference>
<dbReference type="ComplexPortal" id="CPX-1602">
    <property type="entry name" value="54S mitochondrial large ribosomal subunit"/>
</dbReference>
<dbReference type="DIP" id="DIP-3847N"/>
<dbReference type="FunCoup" id="P36525">
    <property type="interactions" value="353"/>
</dbReference>
<dbReference type="IntAct" id="P36525">
    <property type="interactions" value="66"/>
</dbReference>
<dbReference type="MINT" id="P36525"/>
<dbReference type="STRING" id="4932.YMR193W"/>
<dbReference type="iPTMnet" id="P36525"/>
<dbReference type="PaxDb" id="4932-YMR193W"/>
<dbReference type="PeptideAtlas" id="P36525"/>
<dbReference type="EnsemblFungi" id="YMR193W_mRNA">
    <property type="protein sequence ID" value="YMR193W"/>
    <property type="gene ID" value="YMR193W"/>
</dbReference>
<dbReference type="GeneID" id="855231"/>
<dbReference type="KEGG" id="sce:YMR193W"/>
<dbReference type="AGR" id="SGD:S000004806"/>
<dbReference type="SGD" id="S000004806">
    <property type="gene designation" value="MRPL24"/>
</dbReference>
<dbReference type="VEuPathDB" id="FungiDB:YMR193W"/>
<dbReference type="eggNOG" id="KOG3278">
    <property type="taxonomic scope" value="Eukaryota"/>
</dbReference>
<dbReference type="GeneTree" id="ENSGT00390000017359"/>
<dbReference type="HOGENOM" id="CLU_090033_0_0_1"/>
<dbReference type="InParanoid" id="P36525"/>
<dbReference type="OMA" id="IKMTAKV"/>
<dbReference type="OrthoDB" id="361870at2759"/>
<dbReference type="BioCyc" id="YEAST:G3O-32880-MONOMER"/>
<dbReference type="BioGRID-ORCS" id="855231">
    <property type="hits" value="2 hits in 10 CRISPR screens"/>
</dbReference>
<dbReference type="PRO" id="PR:P36525"/>
<dbReference type="Proteomes" id="UP000002311">
    <property type="component" value="Chromosome XIII"/>
</dbReference>
<dbReference type="RNAct" id="P36525">
    <property type="molecule type" value="protein"/>
</dbReference>
<dbReference type="GO" id="GO:0005743">
    <property type="term" value="C:mitochondrial inner membrane"/>
    <property type="evidence" value="ECO:0000303"/>
    <property type="project" value="ComplexPortal"/>
</dbReference>
<dbReference type="GO" id="GO:0005762">
    <property type="term" value="C:mitochondrial large ribosomal subunit"/>
    <property type="evidence" value="ECO:0000314"/>
    <property type="project" value="SGD"/>
</dbReference>
<dbReference type="GO" id="GO:0005739">
    <property type="term" value="C:mitochondrion"/>
    <property type="evidence" value="ECO:0007005"/>
    <property type="project" value="SGD"/>
</dbReference>
<dbReference type="GO" id="GO:0003735">
    <property type="term" value="F:structural constituent of ribosome"/>
    <property type="evidence" value="ECO:0000314"/>
    <property type="project" value="SGD"/>
</dbReference>
<dbReference type="GO" id="GO:0032543">
    <property type="term" value="P:mitochondrial translation"/>
    <property type="evidence" value="ECO:0000303"/>
    <property type="project" value="ComplexPortal"/>
</dbReference>
<dbReference type="FunFam" id="2.30.170.40:FF:000003">
    <property type="entry name" value="54S ribosomal protein L24"/>
    <property type="match status" value="1"/>
</dbReference>
<dbReference type="Gene3D" id="2.30.170.40">
    <property type="entry name" value="Ribosomal protein L28/L24"/>
    <property type="match status" value="1"/>
</dbReference>
<dbReference type="InterPro" id="IPR026569">
    <property type="entry name" value="Ribosomal_bL28"/>
</dbReference>
<dbReference type="InterPro" id="IPR034704">
    <property type="entry name" value="Ribosomal_bL28/bL31-like_sf"/>
</dbReference>
<dbReference type="InterPro" id="IPR037147">
    <property type="entry name" value="Ribosomal_bL28_sf"/>
</dbReference>
<dbReference type="PANTHER" id="PTHR13528">
    <property type="entry name" value="39S RIBOSOMAL PROTEIN L28, MITOCHONDRIAL"/>
    <property type="match status" value="1"/>
</dbReference>
<dbReference type="PANTHER" id="PTHR13528:SF2">
    <property type="entry name" value="LARGE RIBOSOMAL SUBUNIT PROTEIN BL28M"/>
    <property type="match status" value="1"/>
</dbReference>
<dbReference type="Pfam" id="PF00830">
    <property type="entry name" value="Ribosomal_L28"/>
    <property type="match status" value="1"/>
</dbReference>
<dbReference type="SUPFAM" id="SSF143800">
    <property type="entry name" value="L28p-like"/>
    <property type="match status" value="1"/>
</dbReference>
<gene>
    <name type="primary">MRPL24</name>
    <name type="synonym">MRPL14</name>
    <name type="ordered locus">YMR193W</name>
    <name type="ORF">YM9646.05</name>
</gene>
<reference key="1">
    <citation type="journal article" date="1997" name="Nature">
        <title>The nucleotide sequence of Saccharomyces cerevisiae chromosome XIII.</title>
        <authorList>
            <person name="Bowman S."/>
            <person name="Churcher C.M."/>
            <person name="Badcock K."/>
            <person name="Brown D."/>
            <person name="Chillingworth T."/>
            <person name="Connor R."/>
            <person name="Dedman K."/>
            <person name="Devlin K."/>
            <person name="Gentles S."/>
            <person name="Hamlin N."/>
            <person name="Hunt S."/>
            <person name="Jagels K."/>
            <person name="Lye G."/>
            <person name="Moule S."/>
            <person name="Odell C."/>
            <person name="Pearson D."/>
            <person name="Rajandream M.A."/>
            <person name="Rice P."/>
            <person name="Skelton J."/>
            <person name="Walsh S.V."/>
            <person name="Whitehead S."/>
            <person name="Barrell B.G."/>
        </authorList>
    </citation>
    <scope>NUCLEOTIDE SEQUENCE [LARGE SCALE GENOMIC DNA]</scope>
    <source>
        <strain>ATCC 204508 / S288c</strain>
    </source>
</reference>
<reference key="2">
    <citation type="journal article" date="2014" name="G3 (Bethesda)">
        <title>The reference genome sequence of Saccharomyces cerevisiae: Then and now.</title>
        <authorList>
            <person name="Engel S.R."/>
            <person name="Dietrich F.S."/>
            <person name="Fisk D.G."/>
            <person name="Binkley G."/>
            <person name="Balakrishnan R."/>
            <person name="Costanzo M.C."/>
            <person name="Dwight S.S."/>
            <person name="Hitz B.C."/>
            <person name="Karra K."/>
            <person name="Nash R.S."/>
            <person name="Weng S."/>
            <person name="Wong E.D."/>
            <person name="Lloyd P."/>
            <person name="Skrzypek M.S."/>
            <person name="Miyasato S.R."/>
            <person name="Simison M."/>
            <person name="Cherry J.M."/>
        </authorList>
    </citation>
    <scope>GENOME REANNOTATION</scope>
    <source>
        <strain>ATCC 204508 / S288c</strain>
    </source>
</reference>
<reference key="3">
    <citation type="journal article" date="2007" name="Genome Res.">
        <title>Approaching a complete repository of sequence-verified protein-encoding clones for Saccharomyces cerevisiae.</title>
        <authorList>
            <person name="Hu Y."/>
            <person name="Rolfs A."/>
            <person name="Bhullar B."/>
            <person name="Murthy T.V.S."/>
            <person name="Zhu C."/>
            <person name="Berger M.F."/>
            <person name="Camargo A.A."/>
            <person name="Kelley F."/>
            <person name="McCarron S."/>
            <person name="Jepson D."/>
            <person name="Richardson A."/>
            <person name="Raphael J."/>
            <person name="Moreira D."/>
            <person name="Taycher E."/>
            <person name="Zuo D."/>
            <person name="Mohr S."/>
            <person name="Kane M.F."/>
            <person name="Williamson J."/>
            <person name="Simpson A.J.G."/>
            <person name="Bulyk M.L."/>
            <person name="Harlow E."/>
            <person name="Marsischky G."/>
            <person name="Kolodner R.D."/>
            <person name="LaBaer J."/>
        </authorList>
    </citation>
    <scope>NUCLEOTIDE SEQUENCE [GENOMIC DNA]</scope>
    <source>
        <strain>ATCC 204508 / S288c</strain>
    </source>
</reference>
<reference key="4">
    <citation type="journal article" date="1991" name="FEBS Lett.">
        <title>Extended N-terminal sequencing of proteins of the large ribosomal subunit from yeast mitochondria.</title>
        <authorList>
            <person name="Grohmann L."/>
            <person name="Graack H.-R."/>
            <person name="Kruft V."/>
            <person name="Choli T."/>
            <person name="Goldschmidt-Reisin S."/>
            <person name="Kitakawa M."/>
        </authorList>
    </citation>
    <scope>PROTEIN SEQUENCE OF 22-49 AND 72-87</scope>
    <scope>SUBUNIT</scope>
    <source>
        <strain>07173</strain>
    </source>
</reference>
<reference key="5">
    <citation type="journal article" date="1997" name="Eur. J. Biochem.">
        <title>Identification and characterization of the genes for mitochondrial ribosomal proteins of Saccharomyces cerevisiae.</title>
        <authorList>
            <person name="Kitakawa M."/>
            <person name="Graack H.-R."/>
            <person name="Grohmann L."/>
            <person name="Goldschmidt-Reisin S."/>
            <person name="Herfurth E."/>
            <person name="Wittmann-Liebold B."/>
            <person name="Nishimura T."/>
            <person name="Isono K."/>
        </authorList>
    </citation>
    <scope>PROTEIN SEQUENCE OF 72-83 AND 129-138</scope>
    <scope>SUBUNIT</scope>
    <source>
        <strain>07173</strain>
    </source>
</reference>
<reference key="6">
    <citation type="journal article" date="2003" name="Nature">
        <title>Global analysis of protein expression in yeast.</title>
        <authorList>
            <person name="Ghaemmaghami S."/>
            <person name="Huh W.-K."/>
            <person name="Bower K."/>
            <person name="Howson R.W."/>
            <person name="Belle A."/>
            <person name="Dephoure N."/>
            <person name="O'Shea E.K."/>
            <person name="Weissman J.S."/>
        </authorList>
    </citation>
    <scope>LEVEL OF PROTEIN EXPRESSION [LARGE SCALE ANALYSIS]</scope>
</reference>
<reference key="7">
    <citation type="journal article" date="2003" name="Proc. Natl. Acad. Sci. U.S.A.">
        <title>The proteome of Saccharomyces cerevisiae mitochondria.</title>
        <authorList>
            <person name="Sickmann A."/>
            <person name="Reinders J."/>
            <person name="Wagner Y."/>
            <person name="Joppich C."/>
            <person name="Zahedi R.P."/>
            <person name="Meyer H.E."/>
            <person name="Schoenfisch B."/>
            <person name="Perschil I."/>
            <person name="Chacinska A."/>
            <person name="Guiard B."/>
            <person name="Rehling P."/>
            <person name="Pfanner N."/>
            <person name="Meisinger C."/>
        </authorList>
    </citation>
    <scope>SUBCELLULAR LOCATION [LARGE SCALE ANALYSIS]</scope>
    <source>
        <strain>ATCC 76625 / YPH499</strain>
    </source>
</reference>
<reference key="8">
    <citation type="journal article" date="2015" name="Nat. Commun.">
        <title>Organization of the mitochondrial translation machinery studied in situ by cryoelectron tomography.</title>
        <authorList>
            <person name="Pfeffer S."/>
            <person name="Woellhaf M.W."/>
            <person name="Herrmann J.M."/>
            <person name="Forster F."/>
        </authorList>
    </citation>
    <scope>SUBCELLULAR LOCATION</scope>
</reference>
<reference key="9">
    <citation type="journal article" date="2014" name="Science">
        <title>Structure of the yeast mitochondrial large ribosomal subunit.</title>
        <authorList>
            <person name="Amunts A."/>
            <person name="Brown A."/>
            <person name="Bai X.C."/>
            <person name="Llacer J.L."/>
            <person name="Hussain T."/>
            <person name="Emsley P."/>
            <person name="Long F."/>
            <person name="Murshudov G."/>
            <person name="Scheres S.H."/>
            <person name="Ramakrishnan V."/>
        </authorList>
    </citation>
    <scope>STRUCTURE BY ELECTRON MICROSCOPY (3.20 ANGSTROMS)</scope>
    <scope>SUBUNIT</scope>
</reference>
<organism>
    <name type="scientific">Saccharomyces cerevisiae (strain ATCC 204508 / S288c)</name>
    <name type="common">Baker's yeast</name>
    <dbReference type="NCBI Taxonomy" id="559292"/>
    <lineage>
        <taxon>Eukaryota</taxon>
        <taxon>Fungi</taxon>
        <taxon>Dikarya</taxon>
        <taxon>Ascomycota</taxon>
        <taxon>Saccharomycotina</taxon>
        <taxon>Saccharomycetes</taxon>
        <taxon>Saccharomycetales</taxon>
        <taxon>Saccharomycetaceae</taxon>
        <taxon>Saccharomyces</taxon>
    </lineage>
</organism>
<keyword id="KW-0002">3D-structure</keyword>
<keyword id="KW-0903">Direct protein sequencing</keyword>
<keyword id="KW-0496">Mitochondrion</keyword>
<keyword id="KW-1185">Reference proteome</keyword>
<keyword id="KW-0687">Ribonucleoprotein</keyword>
<keyword id="KW-0689">Ribosomal protein</keyword>
<keyword id="KW-0809">Transit peptide</keyword>
<proteinExistence type="evidence at protein level"/>
<protein>
    <recommendedName>
        <fullName evidence="7">Large ribosomal subunit protein bL28m</fullName>
    </recommendedName>
    <alternativeName>
        <fullName>54S ribosomal protein L24, mitochondrial</fullName>
    </alternativeName>
    <alternativeName>
        <fullName>YmL14/YmL24</fullName>
    </alternativeName>
</protein>